<organism>
    <name type="scientific">Mus musculus</name>
    <name type="common">Mouse</name>
    <dbReference type="NCBI Taxonomy" id="10090"/>
    <lineage>
        <taxon>Eukaryota</taxon>
        <taxon>Metazoa</taxon>
        <taxon>Chordata</taxon>
        <taxon>Craniata</taxon>
        <taxon>Vertebrata</taxon>
        <taxon>Euteleostomi</taxon>
        <taxon>Mammalia</taxon>
        <taxon>Eutheria</taxon>
        <taxon>Euarchontoglires</taxon>
        <taxon>Glires</taxon>
        <taxon>Rodentia</taxon>
        <taxon>Myomorpha</taxon>
        <taxon>Muroidea</taxon>
        <taxon>Muridae</taxon>
        <taxon>Murinae</taxon>
        <taxon>Mus</taxon>
        <taxon>Mus</taxon>
    </lineage>
</organism>
<gene>
    <name type="primary">Sec62</name>
    <name type="synonym">Tloc1</name>
</gene>
<accession>Q8BU14</accession>
<accession>Q6NX81</accession>
<protein>
    <recommendedName>
        <fullName>Translocation protein SEC62</fullName>
    </recommendedName>
    <alternativeName>
        <fullName>Translocation protein 1</fullName>
        <shortName>TP-1</shortName>
    </alternativeName>
</protein>
<dbReference type="EMBL" id="AK088093">
    <property type="protein sequence ID" value="BAC40140.1"/>
    <property type="molecule type" value="mRNA"/>
</dbReference>
<dbReference type="EMBL" id="BC067202">
    <property type="protein sequence ID" value="AAH67202.1"/>
    <property type="molecule type" value="mRNA"/>
</dbReference>
<dbReference type="CCDS" id="CCDS17286.1"/>
<dbReference type="RefSeq" id="NP_081292.1">
    <property type="nucleotide sequence ID" value="NM_027016.2"/>
</dbReference>
<dbReference type="SMR" id="Q8BU14"/>
<dbReference type="BioGRID" id="213329">
    <property type="interactions" value="8"/>
</dbReference>
<dbReference type="FunCoup" id="Q8BU14">
    <property type="interactions" value="2971"/>
</dbReference>
<dbReference type="STRING" id="10090.ENSMUSP00000029256"/>
<dbReference type="iPTMnet" id="Q8BU14"/>
<dbReference type="PhosphoSitePlus" id="Q8BU14"/>
<dbReference type="SwissPalm" id="Q8BU14"/>
<dbReference type="jPOST" id="Q8BU14"/>
<dbReference type="PaxDb" id="10090-ENSMUSP00000029256"/>
<dbReference type="PeptideAtlas" id="Q8BU14"/>
<dbReference type="ProteomicsDB" id="256766"/>
<dbReference type="Pumba" id="Q8BU14"/>
<dbReference type="Antibodypedia" id="2978">
    <property type="antibodies" value="130 antibodies from 28 providers"/>
</dbReference>
<dbReference type="DNASU" id="69276"/>
<dbReference type="Ensembl" id="ENSMUST00000029256.9">
    <property type="protein sequence ID" value="ENSMUSP00000029256.8"/>
    <property type="gene ID" value="ENSMUSG00000027706.9"/>
</dbReference>
<dbReference type="GeneID" id="69276"/>
<dbReference type="KEGG" id="mmu:69276"/>
<dbReference type="UCSC" id="uc008ovh.1">
    <property type="organism name" value="mouse"/>
</dbReference>
<dbReference type="AGR" id="MGI:1916526"/>
<dbReference type="CTD" id="7095"/>
<dbReference type="MGI" id="MGI:1916526">
    <property type="gene designation" value="Sec62"/>
</dbReference>
<dbReference type="VEuPathDB" id="HostDB:ENSMUSG00000027706"/>
<dbReference type="eggNOG" id="KOG2927">
    <property type="taxonomic scope" value="Eukaryota"/>
</dbReference>
<dbReference type="GeneTree" id="ENSGT00390000002757"/>
<dbReference type="HOGENOM" id="CLU_051910_0_0_1"/>
<dbReference type="InParanoid" id="Q8BU14"/>
<dbReference type="OMA" id="CLLESPW"/>
<dbReference type="OrthoDB" id="200187at2759"/>
<dbReference type="PhylomeDB" id="Q8BU14"/>
<dbReference type="TreeFam" id="TF314944"/>
<dbReference type="BioGRID-ORCS" id="69276">
    <property type="hits" value="11 hits in 77 CRISPR screens"/>
</dbReference>
<dbReference type="ChiTaRS" id="Sec62">
    <property type="organism name" value="mouse"/>
</dbReference>
<dbReference type="PRO" id="PR:Q8BU14"/>
<dbReference type="Proteomes" id="UP000000589">
    <property type="component" value="Chromosome 3"/>
</dbReference>
<dbReference type="RNAct" id="Q8BU14">
    <property type="molecule type" value="protein"/>
</dbReference>
<dbReference type="Bgee" id="ENSMUSG00000027706">
    <property type="expression patterns" value="Expressed in saccule of membranous labyrinth and 256 other cell types or tissues"/>
</dbReference>
<dbReference type="GO" id="GO:0005789">
    <property type="term" value="C:endoplasmic reticulum membrane"/>
    <property type="evidence" value="ECO:0007669"/>
    <property type="project" value="UniProtKB-SubCell"/>
</dbReference>
<dbReference type="GO" id="GO:0016020">
    <property type="term" value="C:membrane"/>
    <property type="evidence" value="ECO:0000266"/>
    <property type="project" value="MGI"/>
</dbReference>
<dbReference type="GO" id="GO:0006620">
    <property type="term" value="P:post-translational protein targeting to endoplasmic reticulum membrane"/>
    <property type="evidence" value="ECO:0000266"/>
    <property type="project" value="MGI"/>
</dbReference>
<dbReference type="GO" id="GO:0031204">
    <property type="term" value="P:post-translational protein targeting to membrane, translocation"/>
    <property type="evidence" value="ECO:0000250"/>
    <property type="project" value="UniProtKB"/>
</dbReference>
<dbReference type="InterPro" id="IPR004728">
    <property type="entry name" value="Sec62"/>
</dbReference>
<dbReference type="PANTHER" id="PTHR12443">
    <property type="entry name" value="TRANSLOCATION PROTEIN SEC62"/>
    <property type="match status" value="1"/>
</dbReference>
<dbReference type="PANTHER" id="PTHR12443:SF9">
    <property type="entry name" value="TRANSLOCATION PROTEIN SEC62"/>
    <property type="match status" value="1"/>
</dbReference>
<dbReference type="Pfam" id="PF03839">
    <property type="entry name" value="Sec62"/>
    <property type="match status" value="1"/>
</dbReference>
<feature type="chain" id="PRO_0000206617" description="Translocation protein SEC62">
    <location>
        <begin position="1"/>
        <end position="398"/>
    </location>
</feature>
<feature type="topological domain" description="Cytoplasmic" evidence="4">
    <location>
        <begin position="1"/>
        <end position="196"/>
    </location>
</feature>
<feature type="transmembrane region" description="Helical" evidence="4">
    <location>
        <begin position="197"/>
        <end position="217"/>
    </location>
</feature>
<feature type="topological domain" description="Lumenal" evidence="4">
    <location>
        <begin position="218"/>
        <end position="234"/>
    </location>
</feature>
<feature type="transmembrane region" description="Helical" evidence="4">
    <location>
        <begin position="235"/>
        <end position="255"/>
    </location>
</feature>
<feature type="topological domain" description="Cytoplasmic" evidence="4">
    <location>
        <begin position="256"/>
        <end position="398"/>
    </location>
</feature>
<feature type="region of interest" description="Disordered" evidence="5">
    <location>
        <begin position="106"/>
        <end position="167"/>
    </location>
</feature>
<feature type="region of interest" description="Disordered" evidence="5">
    <location>
        <begin position="289"/>
        <end position="398"/>
    </location>
</feature>
<feature type="compositionally biased region" description="Basic and acidic residues" evidence="5">
    <location>
        <begin position="106"/>
        <end position="155"/>
    </location>
</feature>
<feature type="compositionally biased region" description="Basic and acidic residues" evidence="5">
    <location>
        <begin position="289"/>
        <end position="324"/>
    </location>
</feature>
<feature type="compositionally biased region" description="Basic and acidic residues" evidence="5">
    <location>
        <begin position="330"/>
        <end position="354"/>
    </location>
</feature>
<feature type="compositionally biased region" description="Acidic residues" evidence="5">
    <location>
        <begin position="372"/>
        <end position="387"/>
    </location>
</feature>
<feature type="compositionally biased region" description="Basic and acidic residues" evidence="5">
    <location>
        <begin position="388"/>
        <end position="398"/>
    </location>
</feature>
<feature type="modified residue" description="Phosphothreonine" evidence="3">
    <location>
        <position position="158"/>
    </location>
</feature>
<feature type="modified residue" description="Phosphoserine" evidence="7">
    <location>
        <position position="335"/>
    </location>
</feature>
<feature type="modified residue" description="Phosphoserine" evidence="3">
    <location>
        <position position="341"/>
    </location>
</feature>
<feature type="modified residue" description="Phosphoserine" evidence="3">
    <location>
        <position position="353"/>
    </location>
</feature>
<feature type="modified residue" description="Phosphoserine" evidence="10">
    <location>
        <position position="356"/>
    </location>
</feature>
<feature type="modified residue" description="Phosphothreonine" evidence="8 9 10">
    <location>
        <position position="375"/>
    </location>
</feature>
<feature type="sequence conflict" description="In Ref. 2; AAH67202." evidence="6" ref="2">
    <original>L</original>
    <variation>F</variation>
    <location>
        <position position="85"/>
    </location>
</feature>
<proteinExistence type="evidence at protein level"/>
<sequence>MAERRRHKKRIQEVGEPSKEEKAVAKYLRFNCPTKSTNMMGHRVDYFIASKAVECLLDSKWAKAKKGEDALFTTRESVVDYCNRLLKKQFFHRALKVMKMKYDKDVKKEKDKGKSESGKEDDKKSKKESVKEEKTKKEKEKKKDGEKEDSKKEETPGTPKKKETKKKFKLEPHDDQVFLDGNEVFVWIYDPVHIKTFVMGLILVIAVIAATLFPLWPAEMRVGVYYLSVGAGCFVASILLLAIARCILFLIIWLITGGRHHFWFLPNLTADVGFIDSFRPLYTHEYKGPKADLKKDEKSETKKQQKSDSEEKSDSEKKEDEEGKGAPADHGPEGSGGERHSDTDSDRREDDRSQHSSGNGNDFEMITKEELEQQTDGDCDEEDDDKDGEVPKSAHEKS</sequence>
<reference key="1">
    <citation type="journal article" date="2005" name="Science">
        <title>The transcriptional landscape of the mammalian genome.</title>
        <authorList>
            <person name="Carninci P."/>
            <person name="Kasukawa T."/>
            <person name="Katayama S."/>
            <person name="Gough J."/>
            <person name="Frith M.C."/>
            <person name="Maeda N."/>
            <person name="Oyama R."/>
            <person name="Ravasi T."/>
            <person name="Lenhard B."/>
            <person name="Wells C."/>
            <person name="Kodzius R."/>
            <person name="Shimokawa K."/>
            <person name="Bajic V.B."/>
            <person name="Brenner S.E."/>
            <person name="Batalov S."/>
            <person name="Forrest A.R."/>
            <person name="Zavolan M."/>
            <person name="Davis M.J."/>
            <person name="Wilming L.G."/>
            <person name="Aidinis V."/>
            <person name="Allen J.E."/>
            <person name="Ambesi-Impiombato A."/>
            <person name="Apweiler R."/>
            <person name="Aturaliya R.N."/>
            <person name="Bailey T.L."/>
            <person name="Bansal M."/>
            <person name="Baxter L."/>
            <person name="Beisel K.W."/>
            <person name="Bersano T."/>
            <person name="Bono H."/>
            <person name="Chalk A.M."/>
            <person name="Chiu K.P."/>
            <person name="Choudhary V."/>
            <person name="Christoffels A."/>
            <person name="Clutterbuck D.R."/>
            <person name="Crowe M.L."/>
            <person name="Dalla E."/>
            <person name="Dalrymple B.P."/>
            <person name="de Bono B."/>
            <person name="Della Gatta G."/>
            <person name="di Bernardo D."/>
            <person name="Down T."/>
            <person name="Engstrom P."/>
            <person name="Fagiolini M."/>
            <person name="Faulkner G."/>
            <person name="Fletcher C.F."/>
            <person name="Fukushima T."/>
            <person name="Furuno M."/>
            <person name="Futaki S."/>
            <person name="Gariboldi M."/>
            <person name="Georgii-Hemming P."/>
            <person name="Gingeras T.R."/>
            <person name="Gojobori T."/>
            <person name="Green R.E."/>
            <person name="Gustincich S."/>
            <person name="Harbers M."/>
            <person name="Hayashi Y."/>
            <person name="Hensch T.K."/>
            <person name="Hirokawa N."/>
            <person name="Hill D."/>
            <person name="Huminiecki L."/>
            <person name="Iacono M."/>
            <person name="Ikeo K."/>
            <person name="Iwama A."/>
            <person name="Ishikawa T."/>
            <person name="Jakt M."/>
            <person name="Kanapin A."/>
            <person name="Katoh M."/>
            <person name="Kawasawa Y."/>
            <person name="Kelso J."/>
            <person name="Kitamura H."/>
            <person name="Kitano H."/>
            <person name="Kollias G."/>
            <person name="Krishnan S.P."/>
            <person name="Kruger A."/>
            <person name="Kummerfeld S.K."/>
            <person name="Kurochkin I.V."/>
            <person name="Lareau L.F."/>
            <person name="Lazarevic D."/>
            <person name="Lipovich L."/>
            <person name="Liu J."/>
            <person name="Liuni S."/>
            <person name="McWilliam S."/>
            <person name="Madan Babu M."/>
            <person name="Madera M."/>
            <person name="Marchionni L."/>
            <person name="Matsuda H."/>
            <person name="Matsuzawa S."/>
            <person name="Miki H."/>
            <person name="Mignone F."/>
            <person name="Miyake S."/>
            <person name="Morris K."/>
            <person name="Mottagui-Tabar S."/>
            <person name="Mulder N."/>
            <person name="Nakano N."/>
            <person name="Nakauchi H."/>
            <person name="Ng P."/>
            <person name="Nilsson R."/>
            <person name="Nishiguchi S."/>
            <person name="Nishikawa S."/>
            <person name="Nori F."/>
            <person name="Ohara O."/>
            <person name="Okazaki Y."/>
            <person name="Orlando V."/>
            <person name="Pang K.C."/>
            <person name="Pavan W.J."/>
            <person name="Pavesi G."/>
            <person name="Pesole G."/>
            <person name="Petrovsky N."/>
            <person name="Piazza S."/>
            <person name="Reed J."/>
            <person name="Reid J.F."/>
            <person name="Ring B.Z."/>
            <person name="Ringwald M."/>
            <person name="Rost B."/>
            <person name="Ruan Y."/>
            <person name="Salzberg S.L."/>
            <person name="Sandelin A."/>
            <person name="Schneider C."/>
            <person name="Schoenbach C."/>
            <person name="Sekiguchi K."/>
            <person name="Semple C.A."/>
            <person name="Seno S."/>
            <person name="Sessa L."/>
            <person name="Sheng Y."/>
            <person name="Shibata Y."/>
            <person name="Shimada H."/>
            <person name="Shimada K."/>
            <person name="Silva D."/>
            <person name="Sinclair B."/>
            <person name="Sperling S."/>
            <person name="Stupka E."/>
            <person name="Sugiura K."/>
            <person name="Sultana R."/>
            <person name="Takenaka Y."/>
            <person name="Taki K."/>
            <person name="Tammoja K."/>
            <person name="Tan S.L."/>
            <person name="Tang S."/>
            <person name="Taylor M.S."/>
            <person name="Tegner J."/>
            <person name="Teichmann S.A."/>
            <person name="Ueda H.R."/>
            <person name="van Nimwegen E."/>
            <person name="Verardo R."/>
            <person name="Wei C.L."/>
            <person name="Yagi K."/>
            <person name="Yamanishi H."/>
            <person name="Zabarovsky E."/>
            <person name="Zhu S."/>
            <person name="Zimmer A."/>
            <person name="Hide W."/>
            <person name="Bult C."/>
            <person name="Grimmond S.M."/>
            <person name="Teasdale R.D."/>
            <person name="Liu E.T."/>
            <person name="Brusic V."/>
            <person name="Quackenbush J."/>
            <person name="Wahlestedt C."/>
            <person name="Mattick J.S."/>
            <person name="Hume D.A."/>
            <person name="Kai C."/>
            <person name="Sasaki D."/>
            <person name="Tomaru Y."/>
            <person name="Fukuda S."/>
            <person name="Kanamori-Katayama M."/>
            <person name="Suzuki M."/>
            <person name="Aoki J."/>
            <person name="Arakawa T."/>
            <person name="Iida J."/>
            <person name="Imamura K."/>
            <person name="Itoh M."/>
            <person name="Kato T."/>
            <person name="Kawaji H."/>
            <person name="Kawagashira N."/>
            <person name="Kawashima T."/>
            <person name="Kojima M."/>
            <person name="Kondo S."/>
            <person name="Konno H."/>
            <person name="Nakano K."/>
            <person name="Ninomiya N."/>
            <person name="Nishio T."/>
            <person name="Okada M."/>
            <person name="Plessy C."/>
            <person name="Shibata K."/>
            <person name="Shiraki T."/>
            <person name="Suzuki S."/>
            <person name="Tagami M."/>
            <person name="Waki K."/>
            <person name="Watahiki A."/>
            <person name="Okamura-Oho Y."/>
            <person name="Suzuki H."/>
            <person name="Kawai J."/>
            <person name="Hayashizaki Y."/>
        </authorList>
    </citation>
    <scope>NUCLEOTIDE SEQUENCE [LARGE SCALE MRNA]</scope>
    <source>
        <strain>NOD</strain>
        <tissue>Thymus</tissue>
    </source>
</reference>
<reference key="2">
    <citation type="journal article" date="2004" name="Genome Res.">
        <title>The status, quality, and expansion of the NIH full-length cDNA project: the Mammalian Gene Collection (MGC).</title>
        <authorList>
            <consortium name="The MGC Project Team"/>
        </authorList>
    </citation>
    <scope>NUCLEOTIDE SEQUENCE [LARGE SCALE MRNA]</scope>
    <source>
        <tissue>Embryo</tissue>
    </source>
</reference>
<reference key="3">
    <citation type="journal article" date="2007" name="Mol. Cell. Proteomics">
        <title>Mitochondrial phosphoproteome revealed by an improved IMAC method and MS/MS/MS.</title>
        <authorList>
            <person name="Lee J."/>
            <person name="Xu Y."/>
            <person name="Chen Y."/>
            <person name="Sprung R."/>
            <person name="Kim S.C."/>
            <person name="Xie S."/>
            <person name="Zhao Y."/>
        </authorList>
    </citation>
    <scope>PHOSPHORYLATION [LARGE SCALE ANALYSIS] AT SER-335</scope>
    <scope>IDENTIFICATION BY MASS SPECTROMETRY [LARGE SCALE ANALYSIS]</scope>
    <source>
        <tissue>Liver</tissue>
    </source>
</reference>
<reference key="4">
    <citation type="journal article" date="2007" name="Proc. Natl. Acad. Sci. U.S.A.">
        <title>Large-scale phosphorylation analysis of mouse liver.</title>
        <authorList>
            <person name="Villen J."/>
            <person name="Beausoleil S.A."/>
            <person name="Gerber S.A."/>
            <person name="Gygi S.P."/>
        </authorList>
    </citation>
    <scope>PHOSPHORYLATION [LARGE SCALE ANALYSIS] AT THR-375</scope>
    <scope>IDENTIFICATION BY MASS SPECTROMETRY [LARGE SCALE ANALYSIS]</scope>
    <source>
        <tissue>Liver</tissue>
    </source>
</reference>
<reference key="5">
    <citation type="journal article" date="2008" name="J. Proteome Res.">
        <title>Specific phosphopeptide enrichment with immobilized titanium ion affinity chromatography adsorbent for phosphoproteome analysis.</title>
        <authorList>
            <person name="Zhou H."/>
            <person name="Ye M."/>
            <person name="Dong J."/>
            <person name="Han G."/>
            <person name="Jiang X."/>
            <person name="Wu R."/>
            <person name="Zou H."/>
        </authorList>
    </citation>
    <scope>IDENTIFICATION BY MASS SPECTROMETRY [LARGE SCALE ANALYSIS]</scope>
    <source>
        <tissue>Liver</tissue>
    </source>
</reference>
<reference key="6">
    <citation type="journal article" date="2009" name="Immunity">
        <title>The phagosomal proteome in interferon-gamma-activated macrophages.</title>
        <authorList>
            <person name="Trost M."/>
            <person name="English L."/>
            <person name="Lemieux S."/>
            <person name="Courcelles M."/>
            <person name="Desjardins M."/>
            <person name="Thibault P."/>
        </authorList>
    </citation>
    <scope>PHOSPHORYLATION [LARGE SCALE ANALYSIS] AT THR-375</scope>
    <scope>IDENTIFICATION BY MASS SPECTROMETRY [LARGE SCALE ANALYSIS]</scope>
</reference>
<reference key="7">
    <citation type="journal article" date="2010" name="Cell">
        <title>A tissue-specific atlas of mouse protein phosphorylation and expression.</title>
        <authorList>
            <person name="Huttlin E.L."/>
            <person name="Jedrychowski M.P."/>
            <person name="Elias J.E."/>
            <person name="Goswami T."/>
            <person name="Rad R."/>
            <person name="Beausoleil S.A."/>
            <person name="Villen J."/>
            <person name="Haas W."/>
            <person name="Sowa M.E."/>
            <person name="Gygi S.P."/>
        </authorList>
    </citation>
    <scope>PHOSPHORYLATION [LARGE SCALE ANALYSIS] AT SER-356 AND THR-375</scope>
    <scope>IDENTIFICATION BY MASS SPECTROMETRY [LARGE SCALE ANALYSIS]</scope>
    <source>
        <tissue>Brain</tissue>
        <tissue>Brown adipose tissue</tissue>
        <tissue>Heart</tissue>
        <tissue>Kidney</tissue>
        <tissue>Liver</tissue>
        <tissue>Lung</tissue>
        <tissue>Pancreas</tissue>
        <tissue>Spleen</tissue>
        <tissue>Testis</tissue>
    </source>
</reference>
<name>SEC62_MOUSE</name>
<comment type="function">
    <text evidence="3">Mediates post-translational transport of precursor polypeptides across endoplasmic reticulum (ER). Proposed to act as a targeting receptor for small presecretory proteins containing short and apolar signal peptides. Targets and properly positions newly synthesized presecretory proteins into the SEC61 channel-forming translocon complex, triggering channel opening for polypeptide translocation to the ER lumen.</text>
</comment>
<comment type="subunit">
    <text evidence="2 3">The ER translocon complex that consists of channel-forming core components SEC61A1, SEC61B and SEC61G and different auxiliary components such as SEC62 and SEC63. Interacts with SEC61B.</text>
</comment>
<comment type="subcellular location">
    <subcellularLocation>
        <location evidence="1">Endoplasmic reticulum membrane</location>
        <topology evidence="1">Multi-pass membrane protein</topology>
    </subcellularLocation>
</comment>
<comment type="similarity">
    <text evidence="6">Belongs to the SEC62 family.</text>
</comment>
<keyword id="KW-0256">Endoplasmic reticulum</keyword>
<keyword id="KW-0472">Membrane</keyword>
<keyword id="KW-0597">Phosphoprotein</keyword>
<keyword id="KW-0653">Protein transport</keyword>
<keyword id="KW-1185">Reference proteome</keyword>
<keyword id="KW-0811">Translocation</keyword>
<keyword id="KW-0812">Transmembrane</keyword>
<keyword id="KW-1133">Transmembrane helix</keyword>
<keyword id="KW-0813">Transport</keyword>
<evidence type="ECO:0000250" key="1"/>
<evidence type="ECO:0000250" key="2">
    <source>
        <dbReference type="UniProtKB" id="P82009"/>
    </source>
</evidence>
<evidence type="ECO:0000250" key="3">
    <source>
        <dbReference type="UniProtKB" id="Q99442"/>
    </source>
</evidence>
<evidence type="ECO:0000255" key="4"/>
<evidence type="ECO:0000256" key="5">
    <source>
        <dbReference type="SAM" id="MobiDB-lite"/>
    </source>
</evidence>
<evidence type="ECO:0000305" key="6"/>
<evidence type="ECO:0007744" key="7">
    <source>
    </source>
</evidence>
<evidence type="ECO:0007744" key="8">
    <source>
    </source>
</evidence>
<evidence type="ECO:0007744" key="9">
    <source>
    </source>
</evidence>
<evidence type="ECO:0007744" key="10">
    <source>
    </source>
</evidence>